<dbReference type="EMBL" id="GT029142">
    <property type="status" value="NOT_ANNOTATED_CDS"/>
    <property type="molecule type" value="mRNA"/>
</dbReference>
<dbReference type="SMR" id="P0CI90"/>
<dbReference type="GO" id="GO:0005576">
    <property type="term" value="C:extracellular region"/>
    <property type="evidence" value="ECO:0007669"/>
    <property type="project" value="UniProtKB-SubCell"/>
</dbReference>
<dbReference type="GO" id="GO:0016020">
    <property type="term" value="C:membrane"/>
    <property type="evidence" value="ECO:0007669"/>
    <property type="project" value="UniProtKB-KW"/>
</dbReference>
<dbReference type="GO" id="GO:0044218">
    <property type="term" value="C:other organism cell membrane"/>
    <property type="evidence" value="ECO:0007669"/>
    <property type="project" value="UniProtKB-KW"/>
</dbReference>
<dbReference type="GO" id="GO:0042742">
    <property type="term" value="P:defense response to bacterium"/>
    <property type="evidence" value="ECO:0007669"/>
    <property type="project" value="UniProtKB-KW"/>
</dbReference>
<organism>
    <name type="scientific">Lychas mucronatus</name>
    <name type="common">Chinese swimming scorpion</name>
    <dbReference type="NCBI Taxonomy" id="172552"/>
    <lineage>
        <taxon>Eukaryota</taxon>
        <taxon>Metazoa</taxon>
        <taxon>Ecdysozoa</taxon>
        <taxon>Arthropoda</taxon>
        <taxon>Chelicerata</taxon>
        <taxon>Arachnida</taxon>
        <taxon>Scorpiones</taxon>
        <taxon>Buthida</taxon>
        <taxon>Buthoidea</taxon>
        <taxon>Buthidae</taxon>
        <taxon>Lychas</taxon>
    </lineage>
</organism>
<keyword id="KW-0027">Amidation</keyword>
<keyword id="KW-0044">Antibiotic</keyword>
<keyword id="KW-0929">Antimicrobial</keyword>
<keyword id="KW-0165">Cleavage on pair of basic residues</keyword>
<keyword id="KW-0472">Membrane</keyword>
<keyword id="KW-0964">Secreted</keyword>
<keyword id="KW-0732">Signal</keyword>
<keyword id="KW-1052">Target cell membrane</keyword>
<keyword id="KW-1053">Target membrane</keyword>
<keyword id="KW-0812">Transmembrane</keyword>
<evidence type="ECO:0000250" key="1"/>
<evidence type="ECO:0000255" key="2"/>
<evidence type="ECO:0000305" key="3"/>
<proteinExistence type="inferred from homology"/>
<name>NDB4T_LYCMC</name>
<reference key="1">
    <citation type="journal article" date="2010" name="BMC Genomics">
        <title>Comparative venom gland transcriptome analysis of the scorpion Lychas mucronatus reveals intraspecific toxic gene diversity and new venomous components.</title>
        <authorList>
            <person name="Zhao R."/>
            <person name="Ma Y."/>
            <person name="He Y."/>
            <person name="Di Z."/>
            <person name="Wu Y.-L."/>
            <person name="Cao Z.-J."/>
            <person name="Li W.-X."/>
        </authorList>
    </citation>
    <scope>NUCLEOTIDE SEQUENCE [MRNA]</scope>
    <source>
        <strain>Yunnan</strain>
        <tissue>Venom gland</tissue>
    </source>
</reference>
<protein>
    <recommendedName>
        <fullName>Antimicrobial peptide 143</fullName>
    </recommendedName>
</protein>
<feature type="signal peptide" evidence="2">
    <location>
        <begin position="1"/>
        <end position="22"/>
    </location>
</feature>
<feature type="peptide" id="PRO_0000403862" description="Antimicrobial peptide 143">
    <location>
        <begin position="23"/>
        <end position="38"/>
    </location>
</feature>
<feature type="propeptide" id="PRO_0000403863" evidence="1">
    <location>
        <begin position="44"/>
        <end position="73"/>
    </location>
</feature>
<feature type="modified residue" description="Lysine amide" evidence="1">
    <location>
        <position position="38"/>
    </location>
</feature>
<comment type="function">
    <text evidence="1">Cationic host defense peptide that have antibacterial activity by breaking membranes. Is more effective on Gram-positive than on Gram-negative bacteria.</text>
</comment>
<comment type="subcellular location">
    <subcellularLocation>
        <location evidence="1">Secreted</location>
    </subcellularLocation>
    <subcellularLocation>
        <location evidence="1">Target cell membrane</location>
    </subcellularLocation>
    <text evidence="1">Forms a helical membrane channel in the prey.</text>
</comment>
<comment type="tissue specificity">
    <text evidence="3">Expressed by the venom gland.</text>
</comment>
<comment type="similarity">
    <text evidence="3">Belongs to the non-disulfide-bridged peptide (NDBP) superfamily. Short antimicrobial peptide (group 4) family.</text>
</comment>
<accession>P0CI90</accession>
<sequence length="73" mass="8480">MKVKCLLAVFLIVLIAAEHCQALFFLPSLIGGLISAIKGRRKRELGTQFRPQQKNFMRREIDLERLFAEMPDY</sequence>